<sequence length="530" mass="57828">MSRSSPRALPPGALPRPLPAAPAAVQRALLPPWPRRAGRRWPASPLGMKVFRRKALVLCAGYALLLVLTMLNLLDYKWHKEPLQQCNPDGPLGAAVGAAGAGWGRPGSPPAAPPRAHSRMDPRTPYRPPAAGVGAVPAAAAGSAGAAASLGNATRGTRGGGDKRQLVYVFTTWRSGSSFFGELFNQNPEVFFLYEPVWHVWQKLYPGDAVSLQGAARDMLSALYRCDLSVFQLYSPAGSGGRNLTTLGIFGAATNKVVCSSPLCPAYRKEVVGLVDDRVCKKCPPQRLARFEEECRKYRTLVIKGVRVFDVAVLAPLLKDPALDLKVIHLVRDPRAVASSRIRSRHGLIRESLQVVRSRDPRAHRMPFLEAAGHKLGAKKEGMGGPADYHALGAMEVICNSMAKTLQTALQPPDWLQGHYLVVRYEDLVGDPVKTLRRVYDFVGLLVSPEMEQFALNMTSGSGSSSKPFVVSARNATQAANAWRTALTFQQIKQVEEFCYQPMAVLGYERVNSPEEVKDLSKTLLRKPRL</sequence>
<dbReference type="EC" id="2.8.2.-" evidence="5"/>
<dbReference type="EMBL" id="AB011451">
    <property type="protein sequence ID" value="BAA32137.1"/>
    <property type="status" value="ALT_INIT"/>
    <property type="molecule type" value="mRNA"/>
</dbReference>
<dbReference type="EMBL" id="AB011452">
    <property type="protein sequence ID" value="BAA32138.1"/>
    <property type="molecule type" value="mRNA"/>
</dbReference>
<dbReference type="EMBL" id="AB011452">
    <property type="protein sequence ID" value="BAA32139.1"/>
    <property type="status" value="ALT_INIT"/>
    <property type="molecule type" value="mRNA"/>
</dbReference>
<dbReference type="EMBL" id="AB125058">
    <property type="protein sequence ID" value="BAD16775.1"/>
    <property type="status" value="ALT_INIT"/>
    <property type="molecule type" value="Genomic_DNA"/>
</dbReference>
<dbReference type="EMBL" id="AC144813">
    <property type="status" value="NOT_ANNOTATED_CDS"/>
    <property type="molecule type" value="Genomic_DNA"/>
</dbReference>
<dbReference type="EMBL" id="BC051963">
    <property type="protein sequence ID" value="AAH51963.2"/>
    <property type="status" value="ALT_INIT"/>
    <property type="molecule type" value="mRNA"/>
</dbReference>
<dbReference type="CCDS" id="CCDS52888.1"/>
<dbReference type="RefSeq" id="NP_061233.2">
    <property type="nucleotide sequence ID" value="NM_018763.2"/>
</dbReference>
<dbReference type="FunCoup" id="Q80WV3">
    <property type="interactions" value="1843"/>
</dbReference>
<dbReference type="STRING" id="10090.ENSMUSP00000040775"/>
<dbReference type="GlyCosmos" id="Q80WV3">
    <property type="glycosylation" value="3 sites, No reported glycans"/>
</dbReference>
<dbReference type="GlyGen" id="Q80WV3">
    <property type="glycosylation" value="3 sites, 1 N-linked glycan (2 sites)"/>
</dbReference>
<dbReference type="PhosphoSitePlus" id="Q80WV3"/>
<dbReference type="PaxDb" id="10090-ENSMUSP00000040775"/>
<dbReference type="PeptideAtlas" id="Q80WV3"/>
<dbReference type="ProteomicsDB" id="281674"/>
<dbReference type="Antibodypedia" id="2653">
    <property type="antibodies" value="221 antibodies from 27 providers"/>
</dbReference>
<dbReference type="DNASU" id="54371"/>
<dbReference type="Ensembl" id="ENSMUST00000036267.8">
    <property type="protein sequence ID" value="ENSMUSP00000040775.7"/>
    <property type="gene ID" value="ENSMUSG00000033350.8"/>
</dbReference>
<dbReference type="GeneID" id="54371"/>
<dbReference type="KEGG" id="mmu:54371"/>
<dbReference type="UCSC" id="uc009raz.2">
    <property type="organism name" value="mouse"/>
</dbReference>
<dbReference type="AGR" id="MGI:1891160"/>
<dbReference type="CTD" id="9435"/>
<dbReference type="MGI" id="MGI:1891160">
    <property type="gene designation" value="Chst2"/>
</dbReference>
<dbReference type="VEuPathDB" id="HostDB:ENSMUSG00000033350"/>
<dbReference type="eggNOG" id="ENOG502QTSD">
    <property type="taxonomic scope" value="Eukaryota"/>
</dbReference>
<dbReference type="GeneTree" id="ENSGT00940000161292"/>
<dbReference type="HOGENOM" id="CLU_028381_1_0_1"/>
<dbReference type="InParanoid" id="Q80WV3"/>
<dbReference type="OMA" id="DYKWHKG"/>
<dbReference type="OrthoDB" id="6138663at2759"/>
<dbReference type="PhylomeDB" id="Q80WV3"/>
<dbReference type="TreeFam" id="TF342871"/>
<dbReference type="Reactome" id="R-MMU-2022854">
    <property type="pathway name" value="Keratan sulfate biosynthesis"/>
</dbReference>
<dbReference type="UniPathway" id="UPA00353"/>
<dbReference type="BioGRID-ORCS" id="54371">
    <property type="hits" value="1 hit in 79 CRISPR screens"/>
</dbReference>
<dbReference type="ChiTaRS" id="Chst2">
    <property type="organism name" value="mouse"/>
</dbReference>
<dbReference type="PRO" id="PR:Q80WV3"/>
<dbReference type="Proteomes" id="UP000000589">
    <property type="component" value="Chromosome 9"/>
</dbReference>
<dbReference type="RNAct" id="Q80WV3">
    <property type="molecule type" value="protein"/>
</dbReference>
<dbReference type="Bgee" id="ENSMUSG00000033350">
    <property type="expression patterns" value="Expressed in supraoptic nucleus and 233 other cell types or tissues"/>
</dbReference>
<dbReference type="GO" id="GO:0005829">
    <property type="term" value="C:cytosol"/>
    <property type="evidence" value="ECO:0007669"/>
    <property type="project" value="Ensembl"/>
</dbReference>
<dbReference type="GO" id="GO:0000139">
    <property type="term" value="C:Golgi membrane"/>
    <property type="evidence" value="ECO:0007669"/>
    <property type="project" value="InterPro"/>
</dbReference>
<dbReference type="GO" id="GO:0005654">
    <property type="term" value="C:nucleoplasm"/>
    <property type="evidence" value="ECO:0007669"/>
    <property type="project" value="Ensembl"/>
</dbReference>
<dbReference type="GO" id="GO:0005802">
    <property type="term" value="C:trans-Golgi network"/>
    <property type="evidence" value="ECO:0007669"/>
    <property type="project" value="Ensembl"/>
</dbReference>
<dbReference type="GO" id="GO:0001517">
    <property type="term" value="F:N-acetylglucosamine 6-O-sulfotransferase activity"/>
    <property type="evidence" value="ECO:0007669"/>
    <property type="project" value="Ensembl"/>
</dbReference>
<dbReference type="GO" id="GO:0008146">
    <property type="term" value="F:sulfotransferase activity"/>
    <property type="evidence" value="ECO:0000314"/>
    <property type="project" value="MGI"/>
</dbReference>
<dbReference type="GO" id="GO:0005975">
    <property type="term" value="P:carbohydrate metabolic process"/>
    <property type="evidence" value="ECO:0007669"/>
    <property type="project" value="InterPro"/>
</dbReference>
<dbReference type="GO" id="GO:0006954">
    <property type="term" value="P:inflammatory response"/>
    <property type="evidence" value="ECO:0007669"/>
    <property type="project" value="UniProtKB-KW"/>
</dbReference>
<dbReference type="GO" id="GO:0006044">
    <property type="term" value="P:N-acetylglucosamine metabolic process"/>
    <property type="evidence" value="ECO:0000304"/>
    <property type="project" value="MGI"/>
</dbReference>
<dbReference type="GO" id="GO:1903238">
    <property type="term" value="P:positive regulation of leukocyte tethering or rolling"/>
    <property type="evidence" value="ECO:0000315"/>
    <property type="project" value="UniProtKB"/>
</dbReference>
<dbReference type="GO" id="GO:0006790">
    <property type="term" value="P:sulfur compound metabolic process"/>
    <property type="evidence" value="ECO:0007669"/>
    <property type="project" value="Ensembl"/>
</dbReference>
<dbReference type="FunFam" id="3.40.50.300:FF:000765">
    <property type="entry name" value="Sulfotransferase"/>
    <property type="match status" value="1"/>
</dbReference>
<dbReference type="Gene3D" id="3.40.50.300">
    <property type="entry name" value="P-loop containing nucleotide triphosphate hydrolases"/>
    <property type="match status" value="1"/>
</dbReference>
<dbReference type="InterPro" id="IPR016469">
    <property type="entry name" value="Carbohydrate_sulfotransferase"/>
</dbReference>
<dbReference type="InterPro" id="IPR051135">
    <property type="entry name" value="Gal/GlcNAc/GalNAc_ST"/>
</dbReference>
<dbReference type="InterPro" id="IPR027417">
    <property type="entry name" value="P-loop_NTPase"/>
</dbReference>
<dbReference type="InterPro" id="IPR000863">
    <property type="entry name" value="Sulfotransferase_dom"/>
</dbReference>
<dbReference type="PANTHER" id="PTHR10704">
    <property type="entry name" value="CARBOHYDRATE SULFOTRANSFERASE"/>
    <property type="match status" value="1"/>
</dbReference>
<dbReference type="PANTHER" id="PTHR10704:SF3">
    <property type="entry name" value="CARBOHYDRATE SULFOTRANSFERASE 2"/>
    <property type="match status" value="1"/>
</dbReference>
<dbReference type="Pfam" id="PF00685">
    <property type="entry name" value="Sulfotransfer_1"/>
    <property type="match status" value="1"/>
</dbReference>
<dbReference type="PIRSF" id="PIRSF005883">
    <property type="entry name" value="Carbohydrate_sulfotransferase"/>
    <property type="match status" value="1"/>
</dbReference>
<dbReference type="SUPFAM" id="SSF52540">
    <property type="entry name" value="P-loop containing nucleoside triphosphate hydrolases"/>
    <property type="match status" value="1"/>
</dbReference>
<evidence type="ECO:0000250" key="1"/>
<evidence type="ECO:0000255" key="2"/>
<evidence type="ECO:0000256" key="3">
    <source>
        <dbReference type="SAM" id="MobiDB-lite"/>
    </source>
</evidence>
<evidence type="ECO:0000269" key="4">
    <source>
    </source>
</evidence>
<evidence type="ECO:0000269" key="5">
    <source>
    </source>
</evidence>
<evidence type="ECO:0000269" key="6">
    <source>
    </source>
</evidence>
<evidence type="ECO:0000269" key="7">
    <source>
    </source>
</evidence>
<evidence type="ECO:0000305" key="8"/>
<evidence type="ECO:0000305" key="9">
    <source>
    </source>
</evidence>
<accession>Q80WV3</accession>
<accession>E9QNG2</accession>
<accession>O88276</accession>
<accession>Q794G9</accession>
<gene>
    <name type="primary">Chst2</name>
    <name type="synonym">Gst2</name>
</gene>
<keyword id="KW-0119">Carbohydrate metabolism</keyword>
<keyword id="KW-1015">Disulfide bond</keyword>
<keyword id="KW-0325">Glycoprotein</keyword>
<keyword id="KW-0333">Golgi apparatus</keyword>
<keyword id="KW-0395">Inflammatory response</keyword>
<keyword id="KW-0472">Membrane</keyword>
<keyword id="KW-1185">Reference proteome</keyword>
<keyword id="KW-0735">Signal-anchor</keyword>
<keyword id="KW-0808">Transferase</keyword>
<keyword id="KW-0812">Transmembrane</keyword>
<keyword id="KW-1133">Transmembrane helix</keyword>
<organism>
    <name type="scientific">Mus musculus</name>
    <name type="common">Mouse</name>
    <dbReference type="NCBI Taxonomy" id="10090"/>
    <lineage>
        <taxon>Eukaryota</taxon>
        <taxon>Metazoa</taxon>
        <taxon>Chordata</taxon>
        <taxon>Craniata</taxon>
        <taxon>Vertebrata</taxon>
        <taxon>Euteleostomi</taxon>
        <taxon>Mammalia</taxon>
        <taxon>Eutheria</taxon>
        <taxon>Euarchontoglires</taxon>
        <taxon>Glires</taxon>
        <taxon>Rodentia</taxon>
        <taxon>Myomorpha</taxon>
        <taxon>Muroidea</taxon>
        <taxon>Muridae</taxon>
        <taxon>Murinae</taxon>
        <taxon>Mus</taxon>
        <taxon>Mus</taxon>
    </lineage>
</organism>
<protein>
    <recommendedName>
        <fullName>Carbohydrate sulfotransferase 2</fullName>
        <ecNumber evidence="5">2.8.2.-</ecNumber>
    </recommendedName>
    <alternativeName>
        <fullName>Galactose/N-acetylglucosamine/N-acetylglucosamine 6-O-sulfotransferase 2</fullName>
        <shortName>GST-2</shortName>
    </alternativeName>
    <alternativeName>
        <fullName>N-acetylglucosamine 6-O-sulfotransferase 1</fullName>
        <shortName>GlcNAc6ST-1</shortName>
        <shortName>Gn6st-1</shortName>
    </alternativeName>
</protein>
<feature type="chain" id="PRO_0000085187" description="Carbohydrate sulfotransferase 2">
    <location>
        <begin position="1"/>
        <end position="530"/>
    </location>
</feature>
<feature type="topological domain" description="Cytoplasmic" evidence="2">
    <location>
        <begin position="1"/>
        <end position="54"/>
    </location>
</feature>
<feature type="transmembrane region" description="Helical; Signal-anchor for type II membrane protein" evidence="2">
    <location>
        <begin position="55"/>
        <end position="75"/>
    </location>
</feature>
<feature type="topological domain" description="Lumenal" evidence="2">
    <location>
        <begin position="76"/>
        <end position="530"/>
    </location>
</feature>
<feature type="region of interest" description="Disordered" evidence="3">
    <location>
        <begin position="1"/>
        <end position="20"/>
    </location>
</feature>
<feature type="region of interest" description="Disordered" evidence="3">
    <location>
        <begin position="97"/>
        <end position="128"/>
    </location>
</feature>
<feature type="compositionally biased region" description="Pro residues" evidence="3">
    <location>
        <begin position="8"/>
        <end position="20"/>
    </location>
</feature>
<feature type="binding site" evidence="1">
    <location>
        <begin position="173"/>
        <end position="179"/>
    </location>
    <ligand>
        <name>3'-phosphoadenylyl sulfate</name>
        <dbReference type="ChEBI" id="CHEBI:58339"/>
    </ligand>
</feature>
<feature type="binding site" evidence="1">
    <location>
        <begin position="332"/>
        <end position="340"/>
    </location>
    <ligand>
        <name>3'-phosphoadenylyl sulfate</name>
        <dbReference type="ChEBI" id="CHEBI:58339"/>
    </ligand>
</feature>
<feature type="glycosylation site" description="N-linked (GlcNAc...) asparagine" evidence="2">
    <location>
        <position position="243"/>
    </location>
</feature>
<feature type="glycosylation site" description="N-linked (GlcNAc...) asparagine" evidence="2">
    <location>
        <position position="457"/>
    </location>
</feature>
<feature type="glycosylation site" description="N-linked (GlcNAc...) asparagine" evidence="2">
    <location>
        <position position="475"/>
    </location>
</feature>
<feature type="sequence conflict" description="In Ref. 1; BAA32137/BAA32139/BAA32138 and 2; BAD16775." evidence="8" ref="1 2">
    <original>L</original>
    <variation>V</variation>
    <location>
        <position position="301"/>
    </location>
</feature>
<comment type="function">
    <text evidence="4 5 6">Sulfotransferase that utilizes 3'-phospho-5'-adenylyl sulfate (PAPS) as sulfonate donor to catalyze the transfer of sulfate to position 6 of non-reducing N-acetylglucosamine (GlcNAc) residues within keratan-like structures on N-linked glycans and within mucin-associated glycans that can ultimately serve as SELL ligands. SELL ligands are present in high endothelial cells (HEVs) and play a central role in lymphocyte homing at sites of inflammation. Participates in biosynthesis of the SELL ligand sialyl 6-sulfo Lewis X and in lymphocyte homing to Peyer patches. Has no activity toward O-linked sugars. Its substrate specificity may be influenced by its subcellular location. Sulfates GlcNAc residues at terminal, non-reducing ends of oligosaccharide chains.</text>
</comment>
<comment type="catalytic activity">
    <reaction evidence="5">
        <text>3-O-{N-acetyl-beta-D-glucosaminyl-(1-&gt;3)-beta-D-galactosyl-(1-&gt;3)-N-acetyl-alpha-D-galactosaminyl}-L-threonyl-[protein] + 3'-phosphoadenylyl sulfate = 3-O-{6-O-sulfo-N-acetyl-beta-D-glucosaminyl-(1-&gt;3)-beta-D-galactosyl-(1-&gt;3)-N-acetyl-alpha-D-galactosaminyl}-L-threonyl-[protein] + adenosine 3',5'-bisphosphate + H(+)</text>
        <dbReference type="Rhea" id="RHEA:67856"/>
        <dbReference type="Rhea" id="RHEA-COMP:17368"/>
        <dbReference type="Rhea" id="RHEA-COMP:17369"/>
        <dbReference type="ChEBI" id="CHEBI:15378"/>
        <dbReference type="ChEBI" id="CHEBI:58339"/>
        <dbReference type="ChEBI" id="CHEBI:58343"/>
        <dbReference type="ChEBI" id="CHEBI:176489"/>
        <dbReference type="ChEBI" id="CHEBI:176492"/>
    </reaction>
    <physiologicalReaction direction="left-to-right" evidence="9">
        <dbReference type="Rhea" id="RHEA:67857"/>
    </physiologicalReaction>
</comment>
<comment type="catalytic activity">
    <reaction evidence="5">
        <text>3-O-{N-acetyl-beta-D-glucosaminyl-(1-&gt;3)-beta-D-galactosyl-(1-&gt;3)-N-acetyl-alpha-D-galactosaminyl}-L-seryl-[protein] + 3'-phosphoadenylyl sulfate = 3-O-{6-O-sulfo-N-acetyl-beta-D-glucosaminyl-(1-&gt;3)-beta-D-galactosyl-(1-&gt;3)-N-acetyl-alpha-D-galactosaminyl}-L-seryl-[protein] + adenosine 3',5'-bisphosphate + H(+)</text>
        <dbReference type="Rhea" id="RHEA:67860"/>
        <dbReference type="Rhea" id="RHEA-COMP:17365"/>
        <dbReference type="Rhea" id="RHEA-COMP:17366"/>
        <dbReference type="ChEBI" id="CHEBI:15378"/>
        <dbReference type="ChEBI" id="CHEBI:58339"/>
        <dbReference type="ChEBI" id="CHEBI:58343"/>
        <dbReference type="ChEBI" id="CHEBI:176490"/>
        <dbReference type="ChEBI" id="CHEBI:176491"/>
    </reaction>
    <physiologicalReaction direction="left-to-right" evidence="9">
        <dbReference type="Rhea" id="RHEA:67861"/>
    </physiologicalReaction>
</comment>
<comment type="catalytic activity">
    <reaction evidence="5">
        <text>a 3-O-{beta-D-galactosyl-(1-&gt;3)-[N-acetyl-beta-D-glucosaminyl-(1-&gt;6)]-N-acetyl-alpha-D-galactosaminyl}-L-threonyl-[protein] + 3'-phosphoadenylyl sulfate = 3-O-{beta-D-galactosyl-(1-&gt;3)-[6-O-sulfo-N-acetyl-beta-D-glucosaminyl-(1-&gt;6)]-N-acetyl-alpha-D-galactosaminyl}-L-threonyl-[protein] + adenosine 3',5'-bisphosphate + H(+)</text>
        <dbReference type="Rhea" id="RHEA:67864"/>
        <dbReference type="Rhea" id="RHEA-COMP:14420"/>
        <dbReference type="Rhea" id="RHEA-COMP:17370"/>
        <dbReference type="ChEBI" id="CHEBI:15378"/>
        <dbReference type="ChEBI" id="CHEBI:58339"/>
        <dbReference type="ChEBI" id="CHEBI:58343"/>
        <dbReference type="ChEBI" id="CHEBI:139607"/>
        <dbReference type="ChEBI" id="CHEBI:176493"/>
    </reaction>
    <physiologicalReaction direction="left-to-right" evidence="9">
        <dbReference type="Rhea" id="RHEA:67865"/>
    </physiologicalReaction>
</comment>
<comment type="catalytic activity">
    <reaction evidence="5">
        <text>3-O-{beta-D-galactosyl-(1-&gt;3)-[N-acetyl-beta-D-glucosaminyl-(1-&gt;6)]-N-acetyl-alpha-D-galactosaminyl}-L-seryl-[protein] + 3'-phosphoadenylyl sulfate = 3-O-{beta-D-galactosyl-(1-&gt;3)-[6-O-sulfo-N-acetyl-beta-D-glucosaminyl-(1-&gt;6)]-N-acetyl-alpha-D-galactosaminyl}-L-seryl-[protein] + adenosine 3',5'-bisphosphate + H(+)</text>
        <dbReference type="Rhea" id="RHEA:67868"/>
        <dbReference type="Rhea" id="RHEA-COMP:14419"/>
        <dbReference type="Rhea" id="RHEA-COMP:17367"/>
        <dbReference type="ChEBI" id="CHEBI:15378"/>
        <dbReference type="ChEBI" id="CHEBI:58339"/>
        <dbReference type="ChEBI" id="CHEBI:58343"/>
        <dbReference type="ChEBI" id="CHEBI:139605"/>
        <dbReference type="ChEBI" id="CHEBI:176494"/>
    </reaction>
    <physiologicalReaction direction="left-to-right" evidence="9">
        <dbReference type="Rhea" id="RHEA:67869"/>
    </physiologicalReaction>
</comment>
<comment type="pathway">
    <text evidence="5">Protein modification; carbohydrate sulfation.</text>
</comment>
<comment type="subunit">
    <text evidence="1">Homodimer; disulfide-linked. Homodimerization is not essential for enzyme activity (By similarity).</text>
</comment>
<comment type="subcellular location">
    <subcellularLocation>
        <location evidence="1">Golgi apparatus</location>
        <location evidence="1">trans-Golgi network membrane</location>
        <topology evidence="1">Single-pass type II membrane protein</topology>
    </subcellularLocation>
</comment>
<comment type="tissue specificity">
    <text evidence="5 6 7">In brain, it is expressed in pyramidal cells in the CA3 subregion of the hippocampus, cerebellar nucleus and Purkinje cells. Expressed in peripheral lymph nodes.</text>
</comment>
<comment type="disruption phenotype">
    <text evidence="4 5">Mice are impaired in the elaboration of sialyl 6-sulfo Lewis X in HEV. Lymphocyte homing to peripheral lymph nodes, mesenteric lymph nodes, and Peyer patches are significantly reduced. Simultaneous knockdown of CHST4 and CHST2 results in lower contact hypersensitivity response when compared to wild-type littermates.</text>
</comment>
<comment type="similarity">
    <text evidence="8">Belongs to the sulfotransferase 1 family. Gal/GlcNAc/GalNAc subfamily.</text>
</comment>
<comment type="caution">
    <text evidence="8">It is uncertain whether Met-1 or Met-48 is the initiator.</text>
</comment>
<comment type="sequence caution" evidence="8">
    <conflict type="erroneous initiation">
        <sequence resource="EMBL-CDS" id="AAH51963"/>
    </conflict>
</comment>
<comment type="sequence caution" evidence="8">
    <conflict type="erroneous initiation">
        <sequence resource="EMBL-CDS" id="BAA32137"/>
    </conflict>
</comment>
<comment type="sequence caution" evidence="8">
    <conflict type="erroneous initiation">
        <sequence resource="EMBL-CDS" id="BAA32139"/>
    </conflict>
</comment>
<comment type="sequence caution" evidence="8">
    <conflict type="erroneous initiation">
        <sequence resource="EMBL-CDS" id="BAD16775"/>
    </conflict>
</comment>
<reference key="1">
    <citation type="journal article" date="1998" name="J. Biol. Chem.">
        <title>Molecular cloning and characterization of an N-acetylglucosamine-6-O-sulfotransferase.</title>
        <authorList>
            <person name="Uchimura K."/>
            <person name="Muramatsu H."/>
            <person name="Kadomatsu K."/>
            <person name="Fan Q.-W."/>
            <person name="Kurosawa N."/>
            <person name="Mitsuoka C."/>
            <person name="Kannagi R."/>
            <person name="Habuchi O."/>
            <person name="Muramatsu T."/>
        </authorList>
    </citation>
    <scope>NUCLEOTIDE SEQUENCE [MRNA]</scope>
    <scope>FUNCTION</scope>
    <scope>TISSUE SPECIFICITY</scope>
    <source>
        <tissue>Embryo</tissue>
    </source>
</reference>
<reference key="2">
    <citation type="journal article" date="2004" name="J. Biol. Chem.">
        <title>N-acetylglucosamine 6-O-sulfotransferase-1 regulates expression of L-selectin ligands and lymphocyte homing.</title>
        <authorList>
            <person name="Uchimura K."/>
            <person name="Kadomatsu K."/>
            <person name="El-Fasakhany F.M."/>
            <person name="Singer M.S."/>
            <person name="Izawa M."/>
            <person name="Kannagi R."/>
            <person name="Takeda N."/>
            <person name="Rosen S.D."/>
            <person name="Muramatsu T."/>
        </authorList>
    </citation>
    <scope>NUCLEOTIDE SEQUENCE [GENOMIC DNA]</scope>
    <scope>DISRUPTION PHENOTYPE</scope>
    <scope>FUNCTION</scope>
</reference>
<reference key="3">
    <citation type="journal article" date="2009" name="PLoS Biol.">
        <title>Lineage-specific biology revealed by a finished genome assembly of the mouse.</title>
        <authorList>
            <person name="Church D.M."/>
            <person name="Goodstadt L."/>
            <person name="Hillier L.W."/>
            <person name="Zody M.C."/>
            <person name="Goldstein S."/>
            <person name="She X."/>
            <person name="Bult C.J."/>
            <person name="Agarwala R."/>
            <person name="Cherry J.L."/>
            <person name="DiCuccio M."/>
            <person name="Hlavina W."/>
            <person name="Kapustin Y."/>
            <person name="Meric P."/>
            <person name="Maglott D."/>
            <person name="Birtle Z."/>
            <person name="Marques A.C."/>
            <person name="Graves T."/>
            <person name="Zhou S."/>
            <person name="Teague B."/>
            <person name="Potamousis K."/>
            <person name="Churas C."/>
            <person name="Place M."/>
            <person name="Herschleb J."/>
            <person name="Runnheim R."/>
            <person name="Forrest D."/>
            <person name="Amos-Landgraf J."/>
            <person name="Schwartz D.C."/>
            <person name="Cheng Z."/>
            <person name="Lindblad-Toh K."/>
            <person name="Eichler E.E."/>
            <person name="Ponting C.P."/>
        </authorList>
    </citation>
    <scope>NUCLEOTIDE SEQUENCE [LARGE SCALE GENOMIC DNA]</scope>
    <source>
        <strain>C57BL/6J</strain>
    </source>
</reference>
<reference key="4">
    <citation type="journal article" date="2004" name="Genome Res.">
        <title>The status, quality, and expansion of the NIH full-length cDNA project: the Mammalian Gene Collection (MGC).</title>
        <authorList>
            <consortium name="The MGC Project Team"/>
        </authorList>
    </citation>
    <scope>NUCLEOTIDE SEQUENCE [LARGE SCALE MRNA]</scope>
    <source>
        <strain>C57BL/6J</strain>
        <tissue>Brain</tissue>
    </source>
</reference>
<reference key="5">
    <citation type="journal article" date="1998" name="J. Biochem.">
        <title>Human N-acetylglucosamine-6-O-sulfotransferase involved in the biosynthesis of 6-sulfo sialyl Lewis X: molecular cloning, chromosomal mapping, and expression in various organs and tumor cells.</title>
        <authorList>
            <person name="Uchimura K."/>
            <person name="Muramatsu H."/>
            <person name="Kaname T."/>
            <person name="Ogawa H."/>
            <person name="Yamakawa T."/>
            <person name="Fan Q.-W."/>
            <person name="Mitsuoka C."/>
            <person name="Kannagi R."/>
            <person name="Habuchi O."/>
            <person name="Yokoyama I."/>
            <person name="Yamamura K."/>
            <person name="Ozaki T."/>
            <person name="Nakagawara A."/>
            <person name="Kadomatsu K."/>
            <person name="Muramatsu T."/>
        </authorList>
    </citation>
    <scope>TISSUE SPECIFICITY</scope>
</reference>
<reference key="6">
    <citation type="journal article" date="2005" name="Nat. Immunol.">
        <title>N-acetylglucosamine-6-O-sulfotransferases 1 and 2 cooperatively control lymphocyte homing through L-selectin ligand biosynthesis in high endothelial venules.</title>
        <authorList>
            <person name="Kawashima H."/>
            <person name="Petryniak B."/>
            <person name="Hiraoka N."/>
            <person name="Mitoma J."/>
            <person name="Huckaby V."/>
            <person name="Nakayama J."/>
            <person name="Uchimura K."/>
            <person name="Kadomatsu K."/>
            <person name="Muramatsu T."/>
            <person name="Lowe J.B."/>
            <person name="Fukuda M."/>
        </authorList>
    </citation>
    <scope>FUNCTION</scope>
    <scope>CATALYTIC ACTIVITY</scope>
    <scope>PATHWAY</scope>
    <scope>DISRUPTION PHENOTYPE</scope>
    <scope>TISSUE SPECIFICITY</scope>
</reference>
<name>CHST2_MOUSE</name>
<proteinExistence type="evidence at protein level"/>